<name>KMO_ASPFU</name>
<organism>
    <name type="scientific">Aspergillus fumigatus (strain ATCC MYA-4609 / CBS 101355 / FGSC A1100 / Af293)</name>
    <name type="common">Neosartorya fumigata</name>
    <dbReference type="NCBI Taxonomy" id="330879"/>
    <lineage>
        <taxon>Eukaryota</taxon>
        <taxon>Fungi</taxon>
        <taxon>Dikarya</taxon>
        <taxon>Ascomycota</taxon>
        <taxon>Pezizomycotina</taxon>
        <taxon>Eurotiomycetes</taxon>
        <taxon>Eurotiomycetidae</taxon>
        <taxon>Eurotiales</taxon>
        <taxon>Aspergillaceae</taxon>
        <taxon>Aspergillus</taxon>
        <taxon>Aspergillus subgen. Fumigati</taxon>
    </lineage>
</organism>
<comment type="function">
    <text evidence="1">Catalyzes the hydroxylation of L-kynurenine (L-Kyn) to form 3-hydroxy-L-kynurenine (L-3OHKyn). Required for synthesis of quinolinic acid.</text>
</comment>
<comment type="catalytic activity">
    <reaction evidence="1">
        <text>L-kynurenine + NADPH + O2 + H(+) = 3-hydroxy-L-kynurenine + NADP(+) + H2O</text>
        <dbReference type="Rhea" id="RHEA:20545"/>
        <dbReference type="ChEBI" id="CHEBI:15377"/>
        <dbReference type="ChEBI" id="CHEBI:15378"/>
        <dbReference type="ChEBI" id="CHEBI:15379"/>
        <dbReference type="ChEBI" id="CHEBI:57783"/>
        <dbReference type="ChEBI" id="CHEBI:57959"/>
        <dbReference type="ChEBI" id="CHEBI:58125"/>
        <dbReference type="ChEBI" id="CHEBI:58349"/>
        <dbReference type="EC" id="1.14.13.9"/>
    </reaction>
</comment>
<comment type="cofactor">
    <cofactor evidence="1">
        <name>FAD</name>
        <dbReference type="ChEBI" id="CHEBI:57692"/>
    </cofactor>
</comment>
<comment type="pathway">
    <text evidence="1">Cofactor biosynthesis; NAD(+) biosynthesis; quinolinate from L-kynurenine: step 1/3.</text>
</comment>
<comment type="subcellular location">
    <subcellularLocation>
        <location evidence="1">Mitochondrion outer membrane</location>
    </subcellularLocation>
</comment>
<comment type="similarity">
    <text evidence="1">Belongs to the aromatic-ring hydroxylase family. KMO subfamily.</text>
</comment>
<feature type="chain" id="PRO_0000361918" description="Kynurenine 3-monooxygenase">
    <location>
        <begin position="1"/>
        <end position="512"/>
    </location>
</feature>
<sequence>MADTVRKKQKLVVVGAGPVGSLAALYAAARGDEVEIYELRGDLRDPSTVPLNFTKSINLALSERGITAMKHSNREDLVNNVLRDTIPMHGRMIHGRDRGKLWEAAQAYDVHGRAINAVDRSTLNNALLDELECTPNVKLFFNHKLTGADFNARKAWFERRVPGEAPLPNSANRVPEIEVDFDFMIGADGAHSAARYHMMKFARVDYQQEYIDTLWCEFRIPPTEDGDFRISPNHLHIWPGREFMFIALPSADKSFTCTLFAPAAHYKHLGSSPQNLVESFKDHFPGVCPELISPEDLQEQFTTNPHLPLISLKCKPHHYNSSIVIVGDAAHAVLPFYGQGLNAGLEDIRVLFECLDKHGSYNLDASPDARREARAKAFQAYTDQRCADTHAINDLSKQNYLEMRWGVKTPLYKLRKSVEEALDRYVPSLGWQTQYSRVSFSNQRYSDVIRSARWQGRILALGLATTLISTVGVIAYVFWKKPRQYSPLSLLRYSWRRLSSIWVTMFRTIAYA</sequence>
<protein>
    <recommendedName>
        <fullName evidence="1">Kynurenine 3-monooxygenase</fullName>
        <ecNumber evidence="1">1.14.13.9</ecNumber>
    </recommendedName>
    <alternativeName>
        <fullName evidence="1">Biosynthesis of nicotinic acid protein 4</fullName>
    </alternativeName>
    <alternativeName>
        <fullName evidence="1">Kynurenine 3-hydroxylase</fullName>
    </alternativeName>
</protein>
<proteinExistence type="inferred from homology"/>
<gene>
    <name type="primary">bna4</name>
    <name type="ORF">AFUA_6G07340</name>
</gene>
<evidence type="ECO:0000255" key="1">
    <source>
        <dbReference type="HAMAP-Rule" id="MF_03018"/>
    </source>
</evidence>
<keyword id="KW-0274">FAD</keyword>
<keyword id="KW-0285">Flavoprotein</keyword>
<keyword id="KW-0472">Membrane</keyword>
<keyword id="KW-0496">Mitochondrion</keyword>
<keyword id="KW-1000">Mitochondrion outer membrane</keyword>
<keyword id="KW-0503">Monooxygenase</keyword>
<keyword id="KW-0521">NADP</keyword>
<keyword id="KW-0560">Oxidoreductase</keyword>
<keyword id="KW-0662">Pyridine nucleotide biosynthesis</keyword>
<keyword id="KW-1185">Reference proteome</keyword>
<dbReference type="EC" id="1.14.13.9" evidence="1"/>
<dbReference type="EMBL" id="AAHF01000006">
    <property type="protein sequence ID" value="EAL88589.1"/>
    <property type="molecule type" value="Genomic_DNA"/>
</dbReference>
<dbReference type="RefSeq" id="XP_750627.1">
    <property type="nucleotide sequence ID" value="XM_745534.1"/>
</dbReference>
<dbReference type="SMR" id="Q4WN75"/>
<dbReference type="FunCoup" id="Q4WN75">
    <property type="interactions" value="753"/>
</dbReference>
<dbReference type="STRING" id="330879.Q4WN75"/>
<dbReference type="EnsemblFungi" id="EAL88589">
    <property type="protein sequence ID" value="EAL88589"/>
    <property type="gene ID" value="AFUA_6G07340"/>
</dbReference>
<dbReference type="GeneID" id="3508717"/>
<dbReference type="KEGG" id="afm:AFUA_6G07340"/>
<dbReference type="VEuPathDB" id="FungiDB:Afu6g07340"/>
<dbReference type="eggNOG" id="KOG2614">
    <property type="taxonomic scope" value="Eukaryota"/>
</dbReference>
<dbReference type="HOGENOM" id="CLU_023210_2_1_1"/>
<dbReference type="InParanoid" id="Q4WN75"/>
<dbReference type="OMA" id="REFMFIA"/>
<dbReference type="OrthoDB" id="10053569at2759"/>
<dbReference type="UniPathway" id="UPA00253">
    <property type="reaction ID" value="UER00328"/>
</dbReference>
<dbReference type="Proteomes" id="UP000002530">
    <property type="component" value="Chromosome 6"/>
</dbReference>
<dbReference type="GO" id="GO:0005741">
    <property type="term" value="C:mitochondrial outer membrane"/>
    <property type="evidence" value="ECO:0000318"/>
    <property type="project" value="GO_Central"/>
</dbReference>
<dbReference type="GO" id="GO:0071949">
    <property type="term" value="F:FAD binding"/>
    <property type="evidence" value="ECO:0007669"/>
    <property type="project" value="InterPro"/>
</dbReference>
<dbReference type="GO" id="GO:0004502">
    <property type="term" value="F:kynurenine 3-monooxygenase activity"/>
    <property type="evidence" value="ECO:0000318"/>
    <property type="project" value="GO_Central"/>
</dbReference>
<dbReference type="GO" id="GO:0034354">
    <property type="term" value="P:'de novo' NAD biosynthetic process from L-tryptophan"/>
    <property type="evidence" value="ECO:0007669"/>
    <property type="project" value="UniProtKB-UniRule"/>
</dbReference>
<dbReference type="GO" id="GO:0043420">
    <property type="term" value="P:anthranilate metabolic process"/>
    <property type="evidence" value="ECO:0007669"/>
    <property type="project" value="UniProtKB-UniRule"/>
</dbReference>
<dbReference type="GO" id="GO:0070189">
    <property type="term" value="P:kynurenine metabolic process"/>
    <property type="evidence" value="ECO:0000318"/>
    <property type="project" value="GO_Central"/>
</dbReference>
<dbReference type="GO" id="GO:0006569">
    <property type="term" value="P:L-tryptophan catabolic process"/>
    <property type="evidence" value="ECO:0007669"/>
    <property type="project" value="UniProtKB-UniRule"/>
</dbReference>
<dbReference type="GO" id="GO:0019805">
    <property type="term" value="P:quinolinate biosynthetic process"/>
    <property type="evidence" value="ECO:0007669"/>
    <property type="project" value="UniProtKB-UniRule"/>
</dbReference>
<dbReference type="FunFam" id="3.50.50.60:FF:000129">
    <property type="entry name" value="Kynurenine 3-monooxygenase"/>
    <property type="match status" value="1"/>
</dbReference>
<dbReference type="Gene3D" id="3.50.50.60">
    <property type="entry name" value="FAD/NAD(P)-binding domain"/>
    <property type="match status" value="1"/>
</dbReference>
<dbReference type="HAMAP" id="MF_01971">
    <property type="entry name" value="Kynurenine_monooxygenase"/>
    <property type="match status" value="1"/>
</dbReference>
<dbReference type="InterPro" id="IPR002938">
    <property type="entry name" value="FAD-bd"/>
</dbReference>
<dbReference type="InterPro" id="IPR036188">
    <property type="entry name" value="FAD/NAD-bd_sf"/>
</dbReference>
<dbReference type="InterPro" id="IPR027545">
    <property type="entry name" value="Kynurenine_monooxygenase"/>
</dbReference>
<dbReference type="PANTHER" id="PTHR46028">
    <property type="entry name" value="KYNURENINE 3-MONOOXYGENASE"/>
    <property type="match status" value="1"/>
</dbReference>
<dbReference type="PANTHER" id="PTHR46028:SF2">
    <property type="entry name" value="KYNURENINE 3-MONOOXYGENASE"/>
    <property type="match status" value="1"/>
</dbReference>
<dbReference type="Pfam" id="PF01494">
    <property type="entry name" value="FAD_binding_3"/>
    <property type="match status" value="1"/>
</dbReference>
<dbReference type="PRINTS" id="PR00420">
    <property type="entry name" value="RNGMNOXGNASE"/>
</dbReference>
<dbReference type="SUPFAM" id="SSF51905">
    <property type="entry name" value="FAD/NAD(P)-binding domain"/>
    <property type="match status" value="1"/>
</dbReference>
<accession>Q4WN75</accession>
<reference key="1">
    <citation type="journal article" date="2005" name="Nature">
        <title>Genomic sequence of the pathogenic and allergenic filamentous fungus Aspergillus fumigatus.</title>
        <authorList>
            <person name="Nierman W.C."/>
            <person name="Pain A."/>
            <person name="Anderson M.J."/>
            <person name="Wortman J.R."/>
            <person name="Kim H.S."/>
            <person name="Arroyo J."/>
            <person name="Berriman M."/>
            <person name="Abe K."/>
            <person name="Archer D.B."/>
            <person name="Bermejo C."/>
            <person name="Bennett J.W."/>
            <person name="Bowyer P."/>
            <person name="Chen D."/>
            <person name="Collins M."/>
            <person name="Coulsen R."/>
            <person name="Davies R."/>
            <person name="Dyer P.S."/>
            <person name="Farman M.L."/>
            <person name="Fedorova N."/>
            <person name="Fedorova N.D."/>
            <person name="Feldblyum T.V."/>
            <person name="Fischer R."/>
            <person name="Fosker N."/>
            <person name="Fraser A."/>
            <person name="Garcia J.L."/>
            <person name="Garcia M.J."/>
            <person name="Goble A."/>
            <person name="Goldman G.H."/>
            <person name="Gomi K."/>
            <person name="Griffith-Jones S."/>
            <person name="Gwilliam R."/>
            <person name="Haas B.J."/>
            <person name="Haas H."/>
            <person name="Harris D.E."/>
            <person name="Horiuchi H."/>
            <person name="Huang J."/>
            <person name="Humphray S."/>
            <person name="Jimenez J."/>
            <person name="Keller N."/>
            <person name="Khouri H."/>
            <person name="Kitamoto K."/>
            <person name="Kobayashi T."/>
            <person name="Konzack S."/>
            <person name="Kulkarni R."/>
            <person name="Kumagai T."/>
            <person name="Lafton A."/>
            <person name="Latge J.-P."/>
            <person name="Li W."/>
            <person name="Lord A."/>
            <person name="Lu C."/>
            <person name="Majoros W.H."/>
            <person name="May G.S."/>
            <person name="Miller B.L."/>
            <person name="Mohamoud Y."/>
            <person name="Molina M."/>
            <person name="Monod M."/>
            <person name="Mouyna I."/>
            <person name="Mulligan S."/>
            <person name="Murphy L.D."/>
            <person name="O'Neil S."/>
            <person name="Paulsen I."/>
            <person name="Penalva M.A."/>
            <person name="Pertea M."/>
            <person name="Price C."/>
            <person name="Pritchard B.L."/>
            <person name="Quail M.A."/>
            <person name="Rabbinowitsch E."/>
            <person name="Rawlins N."/>
            <person name="Rajandream M.A."/>
            <person name="Reichard U."/>
            <person name="Renauld H."/>
            <person name="Robson G.D."/>
            <person name="Rodriguez de Cordoba S."/>
            <person name="Rodriguez-Pena J.M."/>
            <person name="Ronning C.M."/>
            <person name="Rutter S."/>
            <person name="Salzberg S.L."/>
            <person name="Sanchez M."/>
            <person name="Sanchez-Ferrero J.C."/>
            <person name="Saunders D."/>
            <person name="Seeger K."/>
            <person name="Squares R."/>
            <person name="Squares S."/>
            <person name="Takeuchi M."/>
            <person name="Tekaia F."/>
            <person name="Turner G."/>
            <person name="Vazquez de Aldana C.R."/>
            <person name="Weidman J."/>
            <person name="White O."/>
            <person name="Woodward J.R."/>
            <person name="Yu J.-H."/>
            <person name="Fraser C.M."/>
            <person name="Galagan J.E."/>
            <person name="Asai K."/>
            <person name="Machida M."/>
            <person name="Hall N."/>
            <person name="Barrell B.G."/>
            <person name="Denning D.W."/>
        </authorList>
    </citation>
    <scope>NUCLEOTIDE SEQUENCE [LARGE SCALE GENOMIC DNA]</scope>
    <source>
        <strain>ATCC MYA-4609 / CBS 101355 / FGSC A1100 / Af293</strain>
    </source>
</reference>